<accession>Q49VU2</accession>
<proteinExistence type="inferred from homology"/>
<feature type="chain" id="PRO_1000129050" description="Peptidase T">
    <location>
        <begin position="1"/>
        <end position="410"/>
    </location>
</feature>
<feature type="active site" evidence="1">
    <location>
        <position position="80"/>
    </location>
</feature>
<feature type="active site" description="Proton acceptor" evidence="1">
    <location>
        <position position="174"/>
    </location>
</feature>
<feature type="binding site" evidence="1">
    <location>
        <position position="78"/>
    </location>
    <ligand>
        <name>Zn(2+)</name>
        <dbReference type="ChEBI" id="CHEBI:29105"/>
        <label>1</label>
    </ligand>
</feature>
<feature type="binding site" evidence="1">
    <location>
        <position position="140"/>
    </location>
    <ligand>
        <name>Zn(2+)</name>
        <dbReference type="ChEBI" id="CHEBI:29105"/>
        <label>1</label>
    </ligand>
</feature>
<feature type="binding site" evidence="1">
    <location>
        <position position="140"/>
    </location>
    <ligand>
        <name>Zn(2+)</name>
        <dbReference type="ChEBI" id="CHEBI:29105"/>
        <label>2</label>
    </ligand>
</feature>
<feature type="binding site" evidence="1">
    <location>
        <position position="175"/>
    </location>
    <ligand>
        <name>Zn(2+)</name>
        <dbReference type="ChEBI" id="CHEBI:29105"/>
        <label>2</label>
    </ligand>
</feature>
<feature type="binding site" evidence="1">
    <location>
        <position position="197"/>
    </location>
    <ligand>
        <name>Zn(2+)</name>
        <dbReference type="ChEBI" id="CHEBI:29105"/>
        <label>1</label>
    </ligand>
</feature>
<feature type="binding site" evidence="1">
    <location>
        <position position="379"/>
    </location>
    <ligand>
        <name>Zn(2+)</name>
        <dbReference type="ChEBI" id="CHEBI:29105"/>
        <label>2</label>
    </ligand>
</feature>
<comment type="function">
    <text evidence="1">Cleaves the N-terminal amino acid of tripeptides.</text>
</comment>
<comment type="catalytic activity">
    <reaction evidence="1">
        <text>Release of the N-terminal residue from a tripeptide.</text>
        <dbReference type="EC" id="3.4.11.4"/>
    </reaction>
</comment>
<comment type="cofactor">
    <cofactor evidence="1">
        <name>Zn(2+)</name>
        <dbReference type="ChEBI" id="CHEBI:29105"/>
    </cofactor>
    <text evidence="1">Binds 2 Zn(2+) ions per subunit.</text>
</comment>
<comment type="subcellular location">
    <subcellularLocation>
        <location evidence="1">Cytoplasm</location>
    </subcellularLocation>
</comment>
<comment type="similarity">
    <text evidence="1">Belongs to the peptidase M20B family.</text>
</comment>
<protein>
    <recommendedName>
        <fullName evidence="1">Peptidase T</fullName>
        <ecNumber evidence="1">3.4.11.4</ecNumber>
    </recommendedName>
    <alternativeName>
        <fullName evidence="1">Aminotripeptidase</fullName>
        <shortName evidence="1">Tripeptidase</shortName>
    </alternativeName>
    <alternativeName>
        <fullName evidence="1">Tripeptide aminopeptidase</fullName>
    </alternativeName>
</protein>
<keyword id="KW-0031">Aminopeptidase</keyword>
<keyword id="KW-0963">Cytoplasm</keyword>
<keyword id="KW-0378">Hydrolase</keyword>
<keyword id="KW-0479">Metal-binding</keyword>
<keyword id="KW-0482">Metalloprotease</keyword>
<keyword id="KW-0645">Protease</keyword>
<keyword id="KW-1185">Reference proteome</keyword>
<keyword id="KW-0862">Zinc</keyword>
<reference key="1">
    <citation type="journal article" date="2005" name="Proc. Natl. Acad. Sci. U.S.A.">
        <title>Whole genome sequence of Staphylococcus saprophyticus reveals the pathogenesis of uncomplicated urinary tract infection.</title>
        <authorList>
            <person name="Kuroda M."/>
            <person name="Yamashita A."/>
            <person name="Hirakawa H."/>
            <person name="Kumano M."/>
            <person name="Morikawa K."/>
            <person name="Higashide M."/>
            <person name="Maruyama A."/>
            <person name="Inose Y."/>
            <person name="Matoba K."/>
            <person name="Toh H."/>
            <person name="Kuhara S."/>
            <person name="Hattori M."/>
            <person name="Ohta T."/>
        </authorList>
    </citation>
    <scope>NUCLEOTIDE SEQUENCE [LARGE SCALE GENOMIC DNA]</scope>
    <source>
        <strain>ATCC 15305 / DSM 20229 / NCIMB 8711 / NCTC 7292 / S-41</strain>
    </source>
</reference>
<evidence type="ECO:0000255" key="1">
    <source>
        <dbReference type="HAMAP-Rule" id="MF_00550"/>
    </source>
</evidence>
<dbReference type="EC" id="3.4.11.4" evidence="1"/>
<dbReference type="EMBL" id="AP008934">
    <property type="protein sequence ID" value="BAE19118.1"/>
    <property type="molecule type" value="Genomic_DNA"/>
</dbReference>
<dbReference type="RefSeq" id="WP_011303639.1">
    <property type="nucleotide sequence ID" value="NZ_MTGA01000039.1"/>
</dbReference>
<dbReference type="SMR" id="Q49VU2"/>
<dbReference type="MEROPS" id="M20.003"/>
<dbReference type="GeneID" id="66868134"/>
<dbReference type="KEGG" id="ssp:SSP1973"/>
<dbReference type="PATRIC" id="fig|342451.11.peg.1967"/>
<dbReference type="eggNOG" id="COG2195">
    <property type="taxonomic scope" value="Bacteria"/>
</dbReference>
<dbReference type="HOGENOM" id="CLU_053676_0_0_9"/>
<dbReference type="OrthoDB" id="9804934at2"/>
<dbReference type="Proteomes" id="UP000006371">
    <property type="component" value="Chromosome"/>
</dbReference>
<dbReference type="GO" id="GO:0005829">
    <property type="term" value="C:cytosol"/>
    <property type="evidence" value="ECO:0007669"/>
    <property type="project" value="TreeGrafter"/>
</dbReference>
<dbReference type="GO" id="GO:0008237">
    <property type="term" value="F:metallopeptidase activity"/>
    <property type="evidence" value="ECO:0007669"/>
    <property type="project" value="UniProtKB-KW"/>
</dbReference>
<dbReference type="GO" id="GO:0045148">
    <property type="term" value="F:tripeptide aminopeptidase activity"/>
    <property type="evidence" value="ECO:0007669"/>
    <property type="project" value="UniProtKB-UniRule"/>
</dbReference>
<dbReference type="GO" id="GO:0008270">
    <property type="term" value="F:zinc ion binding"/>
    <property type="evidence" value="ECO:0007669"/>
    <property type="project" value="UniProtKB-UniRule"/>
</dbReference>
<dbReference type="GO" id="GO:0043171">
    <property type="term" value="P:peptide catabolic process"/>
    <property type="evidence" value="ECO:0007669"/>
    <property type="project" value="UniProtKB-UniRule"/>
</dbReference>
<dbReference type="GO" id="GO:0006508">
    <property type="term" value="P:proteolysis"/>
    <property type="evidence" value="ECO:0007669"/>
    <property type="project" value="UniProtKB-UniRule"/>
</dbReference>
<dbReference type="CDD" id="cd03892">
    <property type="entry name" value="M20_peptT"/>
    <property type="match status" value="1"/>
</dbReference>
<dbReference type="FunFam" id="3.30.70.360:FF:000002">
    <property type="entry name" value="Peptidase T"/>
    <property type="match status" value="1"/>
</dbReference>
<dbReference type="Gene3D" id="3.30.70.360">
    <property type="match status" value="1"/>
</dbReference>
<dbReference type="Gene3D" id="3.40.630.10">
    <property type="entry name" value="Zn peptidases"/>
    <property type="match status" value="1"/>
</dbReference>
<dbReference type="HAMAP" id="MF_00550">
    <property type="entry name" value="Aminopeptidase_M20"/>
    <property type="match status" value="1"/>
</dbReference>
<dbReference type="InterPro" id="IPR001261">
    <property type="entry name" value="ArgE/DapE_CS"/>
</dbReference>
<dbReference type="InterPro" id="IPR036264">
    <property type="entry name" value="Bact_exopeptidase_dim_dom"/>
</dbReference>
<dbReference type="InterPro" id="IPR002933">
    <property type="entry name" value="Peptidase_M20"/>
</dbReference>
<dbReference type="InterPro" id="IPR011650">
    <property type="entry name" value="Peptidase_M20_dimer"/>
</dbReference>
<dbReference type="InterPro" id="IPR010161">
    <property type="entry name" value="Peptidase_M20B"/>
</dbReference>
<dbReference type="NCBIfam" id="TIGR01882">
    <property type="entry name" value="peptidase-T"/>
    <property type="match status" value="1"/>
</dbReference>
<dbReference type="NCBIfam" id="NF003976">
    <property type="entry name" value="PRK05469.1"/>
    <property type="match status" value="1"/>
</dbReference>
<dbReference type="NCBIfam" id="NF009920">
    <property type="entry name" value="PRK13381.1"/>
    <property type="match status" value="1"/>
</dbReference>
<dbReference type="PANTHER" id="PTHR42994">
    <property type="entry name" value="PEPTIDASE T"/>
    <property type="match status" value="1"/>
</dbReference>
<dbReference type="PANTHER" id="PTHR42994:SF1">
    <property type="entry name" value="PEPTIDASE T"/>
    <property type="match status" value="1"/>
</dbReference>
<dbReference type="Pfam" id="PF07687">
    <property type="entry name" value="M20_dimer"/>
    <property type="match status" value="1"/>
</dbReference>
<dbReference type="Pfam" id="PF01546">
    <property type="entry name" value="Peptidase_M20"/>
    <property type="match status" value="1"/>
</dbReference>
<dbReference type="PIRSF" id="PIRSF037215">
    <property type="entry name" value="Peptidase_M20B"/>
    <property type="match status" value="1"/>
</dbReference>
<dbReference type="SUPFAM" id="SSF55031">
    <property type="entry name" value="Bacterial exopeptidase dimerisation domain"/>
    <property type="match status" value="1"/>
</dbReference>
<dbReference type="SUPFAM" id="SSF53187">
    <property type="entry name" value="Zn-dependent exopeptidases"/>
    <property type="match status" value="1"/>
</dbReference>
<dbReference type="PROSITE" id="PS00758">
    <property type="entry name" value="ARGE_DAPE_CPG2_1"/>
    <property type="match status" value="1"/>
</dbReference>
<dbReference type="PROSITE" id="PS00759">
    <property type="entry name" value="ARGE_DAPE_CPG2_2"/>
    <property type="match status" value="1"/>
</dbReference>
<gene>
    <name evidence="1" type="primary">pepT</name>
    <name type="ordered locus">SSP1973</name>
</gene>
<name>PEPT_STAS1</name>
<organism>
    <name type="scientific">Staphylococcus saprophyticus subsp. saprophyticus (strain ATCC 15305 / DSM 20229 / NCIMB 8711 / NCTC 7292 / S-41)</name>
    <dbReference type="NCBI Taxonomy" id="342451"/>
    <lineage>
        <taxon>Bacteria</taxon>
        <taxon>Bacillati</taxon>
        <taxon>Bacillota</taxon>
        <taxon>Bacilli</taxon>
        <taxon>Bacillales</taxon>
        <taxon>Staphylococcaceae</taxon>
        <taxon>Staphylococcus</taxon>
    </lineage>
</organism>
<sequence length="410" mass="45959">MKQDIIDRLTRYVTIDTQSNPESTTTPSTEKQWDLLNLLNDELTDLGLETDIDEQGYLFATLDSNVDIDLPTVGFLAHIDTSPDFNASHVNPQIIDNYDGTPIQLGKTNRTLSQDVFPAMKNVEGHTLMITDGTSLLGADDKAGVVEIMEALKYLTSHPEIKHGKIRVAFTPDEEIGRGPHEFDVERFNADFAYTMDGSEYGELQYESFNAAEAIVTCHGVNVHPGSAKDAMINAVLLGQQFNALLPQNEVPERTEGYEGFYHLMKINGDVEKTTLQYIIRDHDRNEFELRKKRLVEIKNDINSHFEDEPIEVEINDQYYNMGEKIEPNPHVIDIPKRVFEKLGIPANTAPIRGGTDGSQLSYMGLPTPNIFTGCDNFHGPFEYASIDVMEKAVQVVVGIAEEVVNTYDK</sequence>